<name>SLU7_CANGA</name>
<comment type="function">
    <text evidence="1">Involved in pre-mRNA splicing.</text>
</comment>
<comment type="subunit">
    <text evidence="1">Associated with the spliceosome.</text>
</comment>
<comment type="subcellular location">
    <subcellularLocation>
        <location evidence="1">Nucleus</location>
    </subcellularLocation>
</comment>
<comment type="similarity">
    <text evidence="3">Belongs to the SLU7 family.</text>
</comment>
<dbReference type="EMBL" id="CR380954">
    <property type="protein sequence ID" value="CAG59942.1"/>
    <property type="molecule type" value="Genomic_DNA"/>
</dbReference>
<dbReference type="RefSeq" id="XP_447009.1">
    <property type="nucleotide sequence ID" value="XM_447009.1"/>
</dbReference>
<dbReference type="SMR" id="Q6FRY5"/>
<dbReference type="FunCoup" id="Q6FRY5">
    <property type="interactions" value="562"/>
</dbReference>
<dbReference type="STRING" id="284593.Q6FRY5"/>
<dbReference type="EnsemblFungi" id="CAGL0H04917g-T">
    <property type="protein sequence ID" value="CAGL0H04917g-T-p1"/>
    <property type="gene ID" value="CAGL0H04917g"/>
</dbReference>
<dbReference type="KEGG" id="cgr:2888505"/>
<dbReference type="CGD" id="CAL0132000">
    <property type="gene designation" value="CAGL0H04917g"/>
</dbReference>
<dbReference type="VEuPathDB" id="FungiDB:CAGL0H04917g"/>
<dbReference type="eggNOG" id="KOG2560">
    <property type="taxonomic scope" value="Eukaryota"/>
</dbReference>
<dbReference type="HOGENOM" id="CLU_072877_0_0_1"/>
<dbReference type="InParanoid" id="Q6FRY5"/>
<dbReference type="OMA" id="KSKMFRR"/>
<dbReference type="Proteomes" id="UP000002428">
    <property type="component" value="Chromosome H"/>
</dbReference>
<dbReference type="GO" id="GO:0000974">
    <property type="term" value="C:Prp19 complex"/>
    <property type="evidence" value="ECO:0007669"/>
    <property type="project" value="EnsemblFungi"/>
</dbReference>
<dbReference type="GO" id="GO:0071021">
    <property type="term" value="C:U2-type post-spliceosomal complex"/>
    <property type="evidence" value="ECO:0007669"/>
    <property type="project" value="EnsemblFungi"/>
</dbReference>
<dbReference type="GO" id="GO:0030628">
    <property type="term" value="F:pre-mRNA 3'-splice site binding"/>
    <property type="evidence" value="ECO:0007669"/>
    <property type="project" value="InterPro"/>
</dbReference>
<dbReference type="GO" id="GO:0000386">
    <property type="term" value="F:second spliceosomal transesterification activity"/>
    <property type="evidence" value="ECO:0007669"/>
    <property type="project" value="EnsemblFungi"/>
</dbReference>
<dbReference type="GO" id="GO:0000350">
    <property type="term" value="P:generation of catalytic spliceosome for second transesterification step"/>
    <property type="evidence" value="ECO:0007669"/>
    <property type="project" value="EnsemblFungi"/>
</dbReference>
<dbReference type="InterPro" id="IPR021715">
    <property type="entry name" value="Slu7_dom"/>
</dbReference>
<dbReference type="InterPro" id="IPR039974">
    <property type="entry name" value="Splicing_factor_SLU7"/>
</dbReference>
<dbReference type="PANTHER" id="PTHR12942:SF2">
    <property type="entry name" value="PRE-MRNA-SPLICING FACTOR SLU7"/>
    <property type="match status" value="1"/>
</dbReference>
<dbReference type="PANTHER" id="PTHR12942">
    <property type="entry name" value="STEP II SPLICING FACTOR SLU7"/>
    <property type="match status" value="1"/>
</dbReference>
<dbReference type="Pfam" id="PF11708">
    <property type="entry name" value="Slu7"/>
    <property type="match status" value="1"/>
</dbReference>
<organism>
    <name type="scientific">Candida glabrata (strain ATCC 2001 / BCRC 20586 / JCM 3761 / NBRC 0622 / NRRL Y-65 / CBS 138)</name>
    <name type="common">Yeast</name>
    <name type="synonym">Nakaseomyces glabratus</name>
    <dbReference type="NCBI Taxonomy" id="284593"/>
    <lineage>
        <taxon>Eukaryota</taxon>
        <taxon>Fungi</taxon>
        <taxon>Dikarya</taxon>
        <taxon>Ascomycota</taxon>
        <taxon>Saccharomycotina</taxon>
        <taxon>Saccharomycetes</taxon>
        <taxon>Saccharomycetales</taxon>
        <taxon>Saccharomycetaceae</taxon>
        <taxon>Nakaseomyces</taxon>
    </lineage>
</organism>
<proteinExistence type="inferred from homology"/>
<accession>Q6FRY5</accession>
<feature type="chain" id="PRO_0000218545" description="Pre-mRNA-splicing factor SLU7">
    <location>
        <begin position="1"/>
        <end position="318"/>
    </location>
</feature>
<feature type="region of interest" description="Disordered" evidence="2">
    <location>
        <begin position="1"/>
        <end position="22"/>
    </location>
</feature>
<feature type="region of interest" description="Disordered" evidence="2">
    <location>
        <begin position="37"/>
        <end position="62"/>
    </location>
</feature>
<feature type="region of interest" description="Disordered" evidence="2">
    <location>
        <begin position="274"/>
        <end position="318"/>
    </location>
</feature>
<feature type="compositionally biased region" description="Basic and acidic residues" evidence="2">
    <location>
        <begin position="1"/>
        <end position="21"/>
    </location>
</feature>
<feature type="compositionally biased region" description="Basic and acidic residues" evidence="2">
    <location>
        <begin position="274"/>
        <end position="284"/>
    </location>
</feature>
<feature type="compositionally biased region" description="Basic residues" evidence="2">
    <location>
        <begin position="285"/>
        <end position="301"/>
    </location>
</feature>
<sequence>MHNKKVTKDEKKNTKTKDVNEHIPNYIKNLPWYYQDIDKNSKNNSKEQDYLRHHRQRRDDKTIDIDNNDQAKIGTGIKDEFEVIVENKKTTIDGIIKRRKDEKDWDARKDRWYGYSGKEYEEVLKKWEKSREDLNNTTEESAYDTDEEIEMMKLGLTPKDLEQNIKGSSVRLREDKAAYLKDIYSSTTNYDPKSRLYKSDDLGSIDEHSNMFLRHLTGEGKELNDLNKFARENAKESGIRDELVDADKVNHVLVANPTKLEVLRKQKELDSLKLTEEQNRQEQRKLKRKAKLLKKKAKKPKGTPQSDSTKAQLMDMYG</sequence>
<protein>
    <recommendedName>
        <fullName>Pre-mRNA-splicing factor SLU7</fullName>
    </recommendedName>
</protein>
<keyword id="KW-0507">mRNA processing</keyword>
<keyword id="KW-0508">mRNA splicing</keyword>
<keyword id="KW-0539">Nucleus</keyword>
<keyword id="KW-1185">Reference proteome</keyword>
<keyword id="KW-0747">Spliceosome</keyword>
<gene>
    <name type="primary">SLU7</name>
    <name type="ordered locus">CAGL0H04917g</name>
</gene>
<reference key="1">
    <citation type="journal article" date="2004" name="Nature">
        <title>Genome evolution in yeasts.</title>
        <authorList>
            <person name="Dujon B."/>
            <person name="Sherman D."/>
            <person name="Fischer G."/>
            <person name="Durrens P."/>
            <person name="Casaregola S."/>
            <person name="Lafontaine I."/>
            <person name="de Montigny J."/>
            <person name="Marck C."/>
            <person name="Neuveglise C."/>
            <person name="Talla E."/>
            <person name="Goffard N."/>
            <person name="Frangeul L."/>
            <person name="Aigle M."/>
            <person name="Anthouard V."/>
            <person name="Babour A."/>
            <person name="Barbe V."/>
            <person name="Barnay S."/>
            <person name="Blanchin S."/>
            <person name="Beckerich J.-M."/>
            <person name="Beyne E."/>
            <person name="Bleykasten C."/>
            <person name="Boisrame A."/>
            <person name="Boyer J."/>
            <person name="Cattolico L."/>
            <person name="Confanioleri F."/>
            <person name="de Daruvar A."/>
            <person name="Despons L."/>
            <person name="Fabre E."/>
            <person name="Fairhead C."/>
            <person name="Ferry-Dumazet H."/>
            <person name="Groppi A."/>
            <person name="Hantraye F."/>
            <person name="Hennequin C."/>
            <person name="Jauniaux N."/>
            <person name="Joyet P."/>
            <person name="Kachouri R."/>
            <person name="Kerrest A."/>
            <person name="Koszul R."/>
            <person name="Lemaire M."/>
            <person name="Lesur I."/>
            <person name="Ma L."/>
            <person name="Muller H."/>
            <person name="Nicaud J.-M."/>
            <person name="Nikolski M."/>
            <person name="Oztas S."/>
            <person name="Ozier-Kalogeropoulos O."/>
            <person name="Pellenz S."/>
            <person name="Potier S."/>
            <person name="Richard G.-F."/>
            <person name="Straub M.-L."/>
            <person name="Suleau A."/>
            <person name="Swennen D."/>
            <person name="Tekaia F."/>
            <person name="Wesolowski-Louvel M."/>
            <person name="Westhof E."/>
            <person name="Wirth B."/>
            <person name="Zeniou-Meyer M."/>
            <person name="Zivanovic Y."/>
            <person name="Bolotin-Fukuhara M."/>
            <person name="Thierry A."/>
            <person name="Bouchier C."/>
            <person name="Caudron B."/>
            <person name="Scarpelli C."/>
            <person name="Gaillardin C."/>
            <person name="Weissenbach J."/>
            <person name="Wincker P."/>
            <person name="Souciet J.-L."/>
        </authorList>
    </citation>
    <scope>NUCLEOTIDE SEQUENCE [LARGE SCALE GENOMIC DNA]</scope>
    <source>
        <strain>ATCC 2001 / BCRC 20586 / JCM 3761 / NBRC 0622 / NRRL Y-65 / CBS 138</strain>
    </source>
</reference>
<evidence type="ECO:0000250" key="1"/>
<evidence type="ECO:0000256" key="2">
    <source>
        <dbReference type="SAM" id="MobiDB-lite"/>
    </source>
</evidence>
<evidence type="ECO:0000305" key="3"/>